<sequence>MSCCGGNCGCGSSCQCGNGCGGCKYSEVEPTTTTTFLADATNKGSGAASGGSEMGAENGSCGCNTCKCGTSCGCSCCNCN</sequence>
<dbReference type="EMBL" id="AB002820">
    <property type="protein sequence ID" value="BAA19661.1"/>
    <property type="molecule type" value="mRNA"/>
</dbReference>
<dbReference type="EMBL" id="AB041032">
    <property type="protein sequence ID" value="BAB40583.1"/>
    <property type="molecule type" value="Genomic_DNA"/>
</dbReference>
<dbReference type="EMBL" id="AP003298">
    <property type="protein sequence ID" value="BAD87425.1"/>
    <property type="molecule type" value="Genomic_DNA"/>
</dbReference>
<dbReference type="EMBL" id="AP003627">
    <property type="protein sequence ID" value="BAD87835.1"/>
    <property type="molecule type" value="Genomic_DNA"/>
</dbReference>
<dbReference type="EMBL" id="AP008207">
    <property type="protein sequence ID" value="BAF07466.1"/>
    <property type="molecule type" value="Genomic_DNA"/>
</dbReference>
<dbReference type="EMBL" id="AP014957">
    <property type="protein sequence ID" value="BAS76451.1"/>
    <property type="molecule type" value="Genomic_DNA"/>
</dbReference>
<dbReference type="EMBL" id="CM000138">
    <property type="protein sequence ID" value="EAZ15007.1"/>
    <property type="molecule type" value="Genomic_DNA"/>
</dbReference>
<dbReference type="EMBL" id="AK062796">
    <property type="protein sequence ID" value="BAG88445.1"/>
    <property type="molecule type" value="mRNA"/>
</dbReference>
<dbReference type="EMBL" id="AK104075">
    <property type="protein sequence ID" value="BAG96398.1"/>
    <property type="molecule type" value="mRNA"/>
</dbReference>
<dbReference type="PIR" id="T03404">
    <property type="entry name" value="T03404"/>
</dbReference>
<dbReference type="RefSeq" id="XP_015619130.1">
    <property type="nucleotide sequence ID" value="XM_015763644.1"/>
</dbReference>
<dbReference type="STRING" id="39947.Q5JM82"/>
<dbReference type="PaxDb" id="39947-Q5JM82"/>
<dbReference type="EnsemblPlants" id="Os01t0974200-01">
    <property type="protein sequence ID" value="Os01t0974200-01"/>
    <property type="gene ID" value="Os01g0974200"/>
</dbReference>
<dbReference type="EnsemblPlants" id="Os01t0974200-02">
    <property type="protein sequence ID" value="Os01t0974200-02"/>
    <property type="gene ID" value="Os01g0974200"/>
</dbReference>
<dbReference type="Gramene" id="Os01t0974200-01">
    <property type="protein sequence ID" value="Os01t0974200-01"/>
    <property type="gene ID" value="Os01g0974200"/>
</dbReference>
<dbReference type="Gramene" id="Os01t0974200-02">
    <property type="protein sequence ID" value="Os01t0974200-02"/>
    <property type="gene ID" value="Os01g0974200"/>
</dbReference>
<dbReference type="KEGG" id="dosa:Os01g0974200"/>
<dbReference type="HOGENOM" id="CLU_161105_3_0_1"/>
<dbReference type="InParanoid" id="Q5JM82"/>
<dbReference type="OMA" id="CKGCKSF"/>
<dbReference type="Proteomes" id="UP000000763">
    <property type="component" value="Chromosome 1"/>
</dbReference>
<dbReference type="Proteomes" id="UP000007752">
    <property type="component" value="Chromosome 1"/>
</dbReference>
<dbReference type="Proteomes" id="UP000059680">
    <property type="component" value="Chromosome 1"/>
</dbReference>
<dbReference type="ExpressionAtlas" id="Q5JM82">
    <property type="expression patterns" value="baseline and differential"/>
</dbReference>
<dbReference type="GO" id="GO:0046872">
    <property type="term" value="F:metal ion binding"/>
    <property type="evidence" value="ECO:0007669"/>
    <property type="project" value="UniProtKB-KW"/>
</dbReference>
<dbReference type="InterPro" id="IPR000347">
    <property type="entry name" value="Metalthion_15p"/>
</dbReference>
<dbReference type="PANTHER" id="PTHR33543">
    <property type="entry name" value="METALLOTHIONEIN-LIKE PROTEIN 2A"/>
    <property type="match status" value="1"/>
</dbReference>
<dbReference type="PANTHER" id="PTHR33543:SF18">
    <property type="entry name" value="METALLOTHIONEIN-LIKE PROTEIN 2C"/>
    <property type="match status" value="1"/>
</dbReference>
<dbReference type="Pfam" id="PF01439">
    <property type="entry name" value="Metallothio_2"/>
    <property type="match status" value="1"/>
</dbReference>
<protein>
    <recommendedName>
        <fullName>Metallothionein-like protein 2B</fullName>
    </recommendedName>
    <alternativeName>
        <fullName>Class I metallothionein-like protein 2B</fullName>
    </alternativeName>
    <alternativeName>
        <fullName>OsMT-I-2b</fullName>
    </alternativeName>
    <alternativeName>
        <fullName>OsMT2c</fullName>
    </alternativeName>
</protein>
<feature type="chain" id="PRO_0000263056" description="Metallothionein-like protein 2B">
    <location>
        <begin position="1"/>
        <end position="80"/>
    </location>
</feature>
<gene>
    <name type="primary">MT2B</name>
    <name type="synonym">RICMT</name>
    <name type="ordered locus">Os01g0974200</name>
    <name type="ordered locus">LOC_Os01g74300</name>
    <name evidence="4" type="ORF">OsJ_04949</name>
    <name type="ORF">P0698H10.31-1</name>
</gene>
<evidence type="ECO:0000269" key="1">
    <source>
    </source>
</evidence>
<evidence type="ECO:0000269" key="2">
    <source>
    </source>
</evidence>
<evidence type="ECO:0000305" key="3"/>
<evidence type="ECO:0000312" key="4">
    <source>
        <dbReference type="EMBL" id="EAZ15007.1"/>
    </source>
</evidence>
<keyword id="KW-0479">Metal-binding</keyword>
<keyword id="KW-0480">Metal-thiolate cluster</keyword>
<keyword id="KW-1185">Reference proteome</keyword>
<organism>
    <name type="scientific">Oryza sativa subsp. japonica</name>
    <name type="common">Rice</name>
    <dbReference type="NCBI Taxonomy" id="39947"/>
    <lineage>
        <taxon>Eukaryota</taxon>
        <taxon>Viridiplantae</taxon>
        <taxon>Streptophyta</taxon>
        <taxon>Embryophyta</taxon>
        <taxon>Tracheophyta</taxon>
        <taxon>Spermatophyta</taxon>
        <taxon>Magnoliopsida</taxon>
        <taxon>Liliopsida</taxon>
        <taxon>Poales</taxon>
        <taxon>Poaceae</taxon>
        <taxon>BOP clade</taxon>
        <taxon>Oryzoideae</taxon>
        <taxon>Oryzeae</taxon>
        <taxon>Oryzinae</taxon>
        <taxon>Oryza</taxon>
        <taxon>Oryza sativa</taxon>
    </lineage>
</organism>
<reference key="1">
    <citation type="journal article" date="1998" name="Gene">
        <title>A novel MT gene of rice plants is strongly expressed in the node portion of the stem.</title>
        <authorList>
            <person name="Yu L.H."/>
            <person name="Umeda M."/>
            <person name="Liu J.-Y."/>
            <person name="Zhao N.M."/>
            <person name="Uchimiya H."/>
        </authorList>
    </citation>
    <scope>NUCLEOTIDE SEQUENCE [MRNA]</scope>
    <scope>TISSUE SPECIFICITY</scope>
    <scope>INDUCTION</scope>
</reference>
<reference key="2">
    <citation type="submission" date="2000-03" db="EMBL/GenBank/DDBJ databases">
        <title>Genomic sequence of the rice metallothionein.</title>
        <authorList>
            <person name="Uchimiya H."/>
        </authorList>
    </citation>
    <scope>NUCLEOTIDE SEQUENCE [GENOMIC DNA]</scope>
</reference>
<reference key="3">
    <citation type="journal article" date="2002" name="Nature">
        <title>The genome sequence and structure of rice chromosome 1.</title>
        <authorList>
            <person name="Sasaki T."/>
            <person name="Matsumoto T."/>
            <person name="Yamamoto K."/>
            <person name="Sakata K."/>
            <person name="Baba T."/>
            <person name="Katayose Y."/>
            <person name="Wu J."/>
            <person name="Niimura Y."/>
            <person name="Cheng Z."/>
            <person name="Nagamura Y."/>
            <person name="Antonio B.A."/>
            <person name="Kanamori H."/>
            <person name="Hosokawa S."/>
            <person name="Masukawa M."/>
            <person name="Arikawa K."/>
            <person name="Chiden Y."/>
            <person name="Hayashi M."/>
            <person name="Okamoto M."/>
            <person name="Ando T."/>
            <person name="Aoki H."/>
            <person name="Arita K."/>
            <person name="Hamada M."/>
            <person name="Harada C."/>
            <person name="Hijishita S."/>
            <person name="Honda M."/>
            <person name="Ichikawa Y."/>
            <person name="Idonuma A."/>
            <person name="Iijima M."/>
            <person name="Ikeda M."/>
            <person name="Ikeno M."/>
            <person name="Ito S."/>
            <person name="Ito T."/>
            <person name="Ito Y."/>
            <person name="Ito Y."/>
            <person name="Iwabuchi A."/>
            <person name="Kamiya K."/>
            <person name="Karasawa W."/>
            <person name="Katagiri S."/>
            <person name="Kikuta A."/>
            <person name="Kobayashi N."/>
            <person name="Kono I."/>
            <person name="Machita K."/>
            <person name="Maehara T."/>
            <person name="Mizuno H."/>
            <person name="Mizubayashi T."/>
            <person name="Mukai Y."/>
            <person name="Nagasaki H."/>
            <person name="Nakashima M."/>
            <person name="Nakama Y."/>
            <person name="Nakamichi Y."/>
            <person name="Nakamura M."/>
            <person name="Namiki N."/>
            <person name="Negishi M."/>
            <person name="Ohta I."/>
            <person name="Ono N."/>
            <person name="Saji S."/>
            <person name="Sakai K."/>
            <person name="Shibata M."/>
            <person name="Shimokawa T."/>
            <person name="Shomura A."/>
            <person name="Song J."/>
            <person name="Takazaki Y."/>
            <person name="Terasawa K."/>
            <person name="Tsuji K."/>
            <person name="Waki K."/>
            <person name="Yamagata H."/>
            <person name="Yamane H."/>
            <person name="Yoshiki S."/>
            <person name="Yoshihara R."/>
            <person name="Yukawa K."/>
            <person name="Zhong H."/>
            <person name="Iwama H."/>
            <person name="Endo T."/>
            <person name="Ito H."/>
            <person name="Hahn J.H."/>
            <person name="Kim H.-I."/>
            <person name="Eun M.-Y."/>
            <person name="Yano M."/>
            <person name="Jiang J."/>
            <person name="Gojobori T."/>
        </authorList>
    </citation>
    <scope>NUCLEOTIDE SEQUENCE [LARGE SCALE GENOMIC DNA]</scope>
    <source>
        <strain>cv. Nipponbare</strain>
    </source>
</reference>
<reference key="4">
    <citation type="journal article" date="2005" name="Nature">
        <title>The map-based sequence of the rice genome.</title>
        <authorList>
            <consortium name="International rice genome sequencing project (IRGSP)"/>
        </authorList>
    </citation>
    <scope>NUCLEOTIDE SEQUENCE [LARGE SCALE GENOMIC DNA]</scope>
    <source>
        <strain>cv. Nipponbare</strain>
    </source>
</reference>
<reference key="5">
    <citation type="journal article" date="2008" name="Nucleic Acids Res.">
        <title>The rice annotation project database (RAP-DB): 2008 update.</title>
        <authorList>
            <consortium name="The rice annotation project (RAP)"/>
        </authorList>
    </citation>
    <scope>GENOME REANNOTATION</scope>
    <source>
        <strain>cv. Nipponbare</strain>
    </source>
</reference>
<reference key="6">
    <citation type="journal article" date="2013" name="Rice">
        <title>Improvement of the Oryza sativa Nipponbare reference genome using next generation sequence and optical map data.</title>
        <authorList>
            <person name="Kawahara Y."/>
            <person name="de la Bastide M."/>
            <person name="Hamilton J.P."/>
            <person name="Kanamori H."/>
            <person name="McCombie W.R."/>
            <person name="Ouyang S."/>
            <person name="Schwartz D.C."/>
            <person name="Tanaka T."/>
            <person name="Wu J."/>
            <person name="Zhou S."/>
            <person name="Childs K.L."/>
            <person name="Davidson R.M."/>
            <person name="Lin H."/>
            <person name="Quesada-Ocampo L."/>
            <person name="Vaillancourt B."/>
            <person name="Sakai H."/>
            <person name="Lee S.S."/>
            <person name="Kim J."/>
            <person name="Numa H."/>
            <person name="Itoh T."/>
            <person name="Buell C.R."/>
            <person name="Matsumoto T."/>
        </authorList>
    </citation>
    <scope>GENOME REANNOTATION</scope>
    <source>
        <strain>cv. Nipponbare</strain>
    </source>
</reference>
<reference key="7">
    <citation type="journal article" date="2005" name="PLoS Biol.">
        <title>The genomes of Oryza sativa: a history of duplications.</title>
        <authorList>
            <person name="Yu J."/>
            <person name="Wang J."/>
            <person name="Lin W."/>
            <person name="Li S."/>
            <person name="Li H."/>
            <person name="Zhou J."/>
            <person name="Ni P."/>
            <person name="Dong W."/>
            <person name="Hu S."/>
            <person name="Zeng C."/>
            <person name="Zhang J."/>
            <person name="Zhang Y."/>
            <person name="Li R."/>
            <person name="Xu Z."/>
            <person name="Li S."/>
            <person name="Li X."/>
            <person name="Zheng H."/>
            <person name="Cong L."/>
            <person name="Lin L."/>
            <person name="Yin J."/>
            <person name="Geng J."/>
            <person name="Li G."/>
            <person name="Shi J."/>
            <person name="Liu J."/>
            <person name="Lv H."/>
            <person name="Li J."/>
            <person name="Wang J."/>
            <person name="Deng Y."/>
            <person name="Ran L."/>
            <person name="Shi X."/>
            <person name="Wang X."/>
            <person name="Wu Q."/>
            <person name="Li C."/>
            <person name="Ren X."/>
            <person name="Wang J."/>
            <person name="Wang X."/>
            <person name="Li D."/>
            <person name="Liu D."/>
            <person name="Zhang X."/>
            <person name="Ji Z."/>
            <person name="Zhao W."/>
            <person name="Sun Y."/>
            <person name="Zhang Z."/>
            <person name="Bao J."/>
            <person name="Han Y."/>
            <person name="Dong L."/>
            <person name="Ji J."/>
            <person name="Chen P."/>
            <person name="Wu S."/>
            <person name="Liu J."/>
            <person name="Xiao Y."/>
            <person name="Bu D."/>
            <person name="Tan J."/>
            <person name="Yang L."/>
            <person name="Ye C."/>
            <person name="Zhang J."/>
            <person name="Xu J."/>
            <person name="Zhou Y."/>
            <person name="Yu Y."/>
            <person name="Zhang B."/>
            <person name="Zhuang S."/>
            <person name="Wei H."/>
            <person name="Liu B."/>
            <person name="Lei M."/>
            <person name="Yu H."/>
            <person name="Li Y."/>
            <person name="Xu H."/>
            <person name="Wei S."/>
            <person name="He X."/>
            <person name="Fang L."/>
            <person name="Zhang Z."/>
            <person name="Zhang Y."/>
            <person name="Huang X."/>
            <person name="Su Z."/>
            <person name="Tong W."/>
            <person name="Li J."/>
            <person name="Tong Z."/>
            <person name="Li S."/>
            <person name="Ye J."/>
            <person name="Wang L."/>
            <person name="Fang L."/>
            <person name="Lei T."/>
            <person name="Chen C.-S."/>
            <person name="Chen H.-C."/>
            <person name="Xu Z."/>
            <person name="Li H."/>
            <person name="Huang H."/>
            <person name="Zhang F."/>
            <person name="Xu H."/>
            <person name="Li N."/>
            <person name="Zhao C."/>
            <person name="Li S."/>
            <person name="Dong L."/>
            <person name="Huang Y."/>
            <person name="Li L."/>
            <person name="Xi Y."/>
            <person name="Qi Q."/>
            <person name="Li W."/>
            <person name="Zhang B."/>
            <person name="Hu W."/>
            <person name="Zhang Y."/>
            <person name="Tian X."/>
            <person name="Jiao Y."/>
            <person name="Liang X."/>
            <person name="Jin J."/>
            <person name="Gao L."/>
            <person name="Zheng W."/>
            <person name="Hao B."/>
            <person name="Liu S.-M."/>
            <person name="Wang W."/>
            <person name="Yuan L."/>
            <person name="Cao M."/>
            <person name="McDermott J."/>
            <person name="Samudrala R."/>
            <person name="Wang J."/>
            <person name="Wong G.K.-S."/>
            <person name="Yang H."/>
        </authorList>
    </citation>
    <scope>NUCLEOTIDE SEQUENCE [LARGE SCALE GENOMIC DNA]</scope>
    <source>
        <strain>cv. Nipponbare</strain>
    </source>
</reference>
<reference key="8">
    <citation type="journal article" date="2003" name="Science">
        <title>Collection, mapping, and annotation of over 28,000 cDNA clones from japonica rice.</title>
        <authorList>
            <consortium name="The rice full-length cDNA consortium"/>
        </authorList>
    </citation>
    <scope>NUCLEOTIDE SEQUENCE [LARGE SCALE MRNA]</scope>
    <source>
        <strain>cv. Nipponbare</strain>
    </source>
</reference>
<reference key="9">
    <citation type="journal article" date="2006" name="J. Biochem. Mol. Biol.">
        <title>Molecular analyses of the metallothionein gene family in rice (Oryza sativa L.).</title>
        <authorList>
            <person name="Zhou G."/>
            <person name="Xu Y."/>
            <person name="Li J."/>
            <person name="Yang L."/>
            <person name="Liu J.-Y."/>
        </authorList>
    </citation>
    <scope>GENE FAMILY</scope>
    <scope>TISSUE SPECIFICITY</scope>
</reference>
<accession>Q5JM82</accession>
<accession>A3A210</accession>
<accession>O04107</accession>
<comment type="function">
    <text evidence="3">Metallothioneins have a high content of cysteine residues that bind various heavy metals.</text>
</comment>
<comment type="tissue specificity">
    <text evidence="1 2">Highly expressed in stems. Expressed in leaves and rachis.</text>
</comment>
<comment type="induction">
    <text evidence="2">By heavy metals.</text>
</comment>
<comment type="similarity">
    <text evidence="3">Belongs to the metallothionein superfamily. Type 15 family.</text>
</comment>
<name>MT2B_ORYSJ</name>
<proteinExistence type="evidence at transcript level"/>